<keyword id="KW-0068">Autocatalytic cleavage</keyword>
<keyword id="KW-0227">DNA damage</keyword>
<keyword id="KW-0234">DNA repair</keyword>
<keyword id="KW-0235">DNA replication</keyword>
<keyword id="KW-0238">DNA-binding</keyword>
<keyword id="KW-0378">Hydrolase</keyword>
<keyword id="KW-0678">Repressor</keyword>
<keyword id="KW-0742">SOS response</keyword>
<keyword id="KW-0804">Transcription</keyword>
<keyword id="KW-0805">Transcription regulation</keyword>
<name>LEXA_YERPA</name>
<dbReference type="EC" id="3.4.21.88" evidence="1"/>
<dbReference type="EMBL" id="CP000308">
    <property type="protein sequence ID" value="ABG15931.1"/>
    <property type="molecule type" value="Genomic_DNA"/>
</dbReference>
<dbReference type="RefSeq" id="WP_002209090.1">
    <property type="nucleotide sequence ID" value="NZ_CP009906.1"/>
</dbReference>
<dbReference type="SMR" id="Q1C0U1"/>
<dbReference type="GeneID" id="57974290"/>
<dbReference type="KEGG" id="ypa:YPA_3970"/>
<dbReference type="Proteomes" id="UP000001971">
    <property type="component" value="Chromosome"/>
</dbReference>
<dbReference type="GO" id="GO:0003677">
    <property type="term" value="F:DNA binding"/>
    <property type="evidence" value="ECO:0007669"/>
    <property type="project" value="UniProtKB-UniRule"/>
</dbReference>
<dbReference type="GO" id="GO:0004252">
    <property type="term" value="F:serine-type endopeptidase activity"/>
    <property type="evidence" value="ECO:0007669"/>
    <property type="project" value="UniProtKB-UniRule"/>
</dbReference>
<dbReference type="GO" id="GO:0006281">
    <property type="term" value="P:DNA repair"/>
    <property type="evidence" value="ECO:0007669"/>
    <property type="project" value="UniProtKB-UniRule"/>
</dbReference>
<dbReference type="GO" id="GO:0006260">
    <property type="term" value="P:DNA replication"/>
    <property type="evidence" value="ECO:0007669"/>
    <property type="project" value="UniProtKB-UniRule"/>
</dbReference>
<dbReference type="GO" id="GO:0045892">
    <property type="term" value="P:negative regulation of DNA-templated transcription"/>
    <property type="evidence" value="ECO:0007669"/>
    <property type="project" value="UniProtKB-UniRule"/>
</dbReference>
<dbReference type="GO" id="GO:0006508">
    <property type="term" value="P:proteolysis"/>
    <property type="evidence" value="ECO:0007669"/>
    <property type="project" value="InterPro"/>
</dbReference>
<dbReference type="GO" id="GO:0009432">
    <property type="term" value="P:SOS response"/>
    <property type="evidence" value="ECO:0007669"/>
    <property type="project" value="UniProtKB-UniRule"/>
</dbReference>
<dbReference type="CDD" id="cd06529">
    <property type="entry name" value="S24_LexA-like"/>
    <property type="match status" value="1"/>
</dbReference>
<dbReference type="FunFam" id="1.10.10.10:FF:000009">
    <property type="entry name" value="LexA repressor"/>
    <property type="match status" value="1"/>
</dbReference>
<dbReference type="FunFam" id="2.10.109.10:FF:000001">
    <property type="entry name" value="LexA repressor"/>
    <property type="match status" value="1"/>
</dbReference>
<dbReference type="Gene3D" id="2.10.109.10">
    <property type="entry name" value="Umud Fragment, subunit A"/>
    <property type="match status" value="1"/>
</dbReference>
<dbReference type="Gene3D" id="1.10.10.10">
    <property type="entry name" value="Winged helix-like DNA-binding domain superfamily/Winged helix DNA-binding domain"/>
    <property type="match status" value="1"/>
</dbReference>
<dbReference type="HAMAP" id="MF_00015">
    <property type="entry name" value="LexA"/>
    <property type="match status" value="1"/>
</dbReference>
<dbReference type="InterPro" id="IPR006200">
    <property type="entry name" value="LexA"/>
</dbReference>
<dbReference type="InterPro" id="IPR039418">
    <property type="entry name" value="LexA-like"/>
</dbReference>
<dbReference type="InterPro" id="IPR036286">
    <property type="entry name" value="LexA/Signal_pep-like_sf"/>
</dbReference>
<dbReference type="InterPro" id="IPR006199">
    <property type="entry name" value="LexA_DNA-bd_dom"/>
</dbReference>
<dbReference type="InterPro" id="IPR050077">
    <property type="entry name" value="LexA_repressor"/>
</dbReference>
<dbReference type="InterPro" id="IPR006197">
    <property type="entry name" value="Peptidase_S24_LexA"/>
</dbReference>
<dbReference type="InterPro" id="IPR015927">
    <property type="entry name" value="Peptidase_S24_S26A/B/C"/>
</dbReference>
<dbReference type="InterPro" id="IPR036388">
    <property type="entry name" value="WH-like_DNA-bd_sf"/>
</dbReference>
<dbReference type="InterPro" id="IPR036390">
    <property type="entry name" value="WH_DNA-bd_sf"/>
</dbReference>
<dbReference type="NCBIfam" id="TIGR00498">
    <property type="entry name" value="lexA"/>
    <property type="match status" value="1"/>
</dbReference>
<dbReference type="PANTHER" id="PTHR33516">
    <property type="entry name" value="LEXA REPRESSOR"/>
    <property type="match status" value="1"/>
</dbReference>
<dbReference type="PANTHER" id="PTHR33516:SF2">
    <property type="entry name" value="LEXA REPRESSOR-RELATED"/>
    <property type="match status" value="1"/>
</dbReference>
<dbReference type="Pfam" id="PF01726">
    <property type="entry name" value="LexA_DNA_bind"/>
    <property type="match status" value="1"/>
</dbReference>
<dbReference type="Pfam" id="PF00717">
    <property type="entry name" value="Peptidase_S24"/>
    <property type="match status" value="1"/>
</dbReference>
<dbReference type="PRINTS" id="PR00726">
    <property type="entry name" value="LEXASERPTASE"/>
</dbReference>
<dbReference type="SUPFAM" id="SSF51306">
    <property type="entry name" value="LexA/Signal peptidase"/>
    <property type="match status" value="1"/>
</dbReference>
<dbReference type="SUPFAM" id="SSF46785">
    <property type="entry name" value="Winged helix' DNA-binding domain"/>
    <property type="match status" value="1"/>
</dbReference>
<proteinExistence type="inferred from homology"/>
<comment type="function">
    <text evidence="1">Represses a number of genes involved in the response to DNA damage (SOS response), including recA and lexA. Binds to the 16 bp palindromic sequence 5'-CTGTATATATATACAG-3'. In the presence of single-stranded DNA, RecA interacts with LexA causing an autocatalytic cleavage which disrupts the DNA-binding part of LexA, leading to derepression of the SOS regulon and eventually DNA repair.</text>
</comment>
<comment type="catalytic activity">
    <reaction evidence="1">
        <text>Hydrolysis of Ala-|-Gly bond in repressor LexA.</text>
        <dbReference type="EC" id="3.4.21.88"/>
    </reaction>
</comment>
<comment type="subunit">
    <text evidence="1">Homodimer.</text>
</comment>
<comment type="similarity">
    <text evidence="1">Belongs to the peptidase S24 family.</text>
</comment>
<accession>Q1C0U1</accession>
<organism>
    <name type="scientific">Yersinia pestis bv. Antiqua (strain Antiqua)</name>
    <dbReference type="NCBI Taxonomy" id="360102"/>
    <lineage>
        <taxon>Bacteria</taxon>
        <taxon>Pseudomonadati</taxon>
        <taxon>Pseudomonadota</taxon>
        <taxon>Gammaproteobacteria</taxon>
        <taxon>Enterobacterales</taxon>
        <taxon>Yersiniaceae</taxon>
        <taxon>Yersinia</taxon>
    </lineage>
</organism>
<protein>
    <recommendedName>
        <fullName evidence="1">LexA repressor</fullName>
        <ecNumber evidence="1">3.4.21.88</ecNumber>
    </recommendedName>
</protein>
<gene>
    <name evidence="1" type="primary">lexA</name>
    <name type="ordered locus">YPA_3970</name>
</gene>
<sequence>MKALTTRQQEVYDLVRDHLAQTGMPPTRAEIAQRLGFRSPNAAEEHLKALARKGVIEIVSGASRGIRLLMEEEEGLPLIGRVAAGEPLLAQQHIEGHYKVDPSLFKPGADFLLRVNGMSMRDIGILDGDLLAVHKTQDVRNGQVVVARIDDEVTVKRLKKQGNIVHLLPENSEFQPIVVDLREQSFTIEGLAVGVIRNGDWI</sequence>
<evidence type="ECO:0000255" key="1">
    <source>
        <dbReference type="HAMAP-Rule" id="MF_00015"/>
    </source>
</evidence>
<feature type="chain" id="PRO_1000001355" description="LexA repressor">
    <location>
        <begin position="1"/>
        <end position="202"/>
    </location>
</feature>
<feature type="DNA-binding region" description="H-T-H motif" evidence="1">
    <location>
        <begin position="28"/>
        <end position="48"/>
    </location>
</feature>
<feature type="active site" description="For autocatalytic cleavage activity" evidence="1">
    <location>
        <position position="119"/>
    </location>
</feature>
<feature type="active site" description="For autocatalytic cleavage activity" evidence="1">
    <location>
        <position position="156"/>
    </location>
</feature>
<feature type="site" description="Cleavage; by autolysis" evidence="1">
    <location>
        <begin position="84"/>
        <end position="85"/>
    </location>
</feature>
<reference key="1">
    <citation type="journal article" date="2006" name="J. Bacteriol.">
        <title>Complete genome sequence of Yersinia pestis strains Antiqua and Nepal516: evidence of gene reduction in an emerging pathogen.</title>
        <authorList>
            <person name="Chain P.S.G."/>
            <person name="Hu P."/>
            <person name="Malfatti S.A."/>
            <person name="Radnedge L."/>
            <person name="Larimer F."/>
            <person name="Vergez L.M."/>
            <person name="Worsham P."/>
            <person name="Chu M.C."/>
            <person name="Andersen G.L."/>
        </authorList>
    </citation>
    <scope>NUCLEOTIDE SEQUENCE [LARGE SCALE GENOMIC DNA]</scope>
    <source>
        <strain>Antiqua</strain>
    </source>
</reference>